<sequence length="101" mass="11545">MTHNHENDHQHEVITLVDEQGNETLFEILLTIDGREEFGKNYVLLVPAGSEEDESGEIEIQAYSFTENEDGTEGDLQPIPEDSDAEWDMIEEVFNSFLDEN</sequence>
<reference key="1">
    <citation type="journal article" date="2006" name="Proc. Natl. Acad. Sci. U.S.A.">
        <title>Molecular genetic anatomy of inter- and intraserotype variation in the human bacterial pathogen group A Streptococcus.</title>
        <authorList>
            <person name="Beres S.B."/>
            <person name="Richter E.W."/>
            <person name="Nagiec M.J."/>
            <person name="Sumby P."/>
            <person name="Porcella S.F."/>
            <person name="DeLeo F.R."/>
            <person name="Musser J.M."/>
        </authorList>
    </citation>
    <scope>NUCLEOTIDE SEQUENCE [LARGE SCALE GENOMIC DNA]</scope>
    <source>
        <strain>MGAS10750</strain>
    </source>
</reference>
<protein>
    <recommendedName>
        <fullName evidence="1">UPF0473 protein MGAS10750_Spy1887</fullName>
    </recommendedName>
</protein>
<comment type="similarity">
    <text evidence="1">Belongs to the UPF0473 family.</text>
</comment>
<feature type="chain" id="PRO_0000304866" description="UPF0473 protein MGAS10750_Spy1887">
    <location>
        <begin position="1"/>
        <end position="101"/>
    </location>
</feature>
<evidence type="ECO:0000255" key="1">
    <source>
        <dbReference type="HAMAP-Rule" id="MF_01448"/>
    </source>
</evidence>
<name>Y1887_STRPF</name>
<accession>Q1J499</accession>
<organism>
    <name type="scientific">Streptococcus pyogenes serotype M4 (strain MGAS10750)</name>
    <dbReference type="NCBI Taxonomy" id="370554"/>
    <lineage>
        <taxon>Bacteria</taxon>
        <taxon>Bacillati</taxon>
        <taxon>Bacillota</taxon>
        <taxon>Bacilli</taxon>
        <taxon>Lactobacillales</taxon>
        <taxon>Streptococcaceae</taxon>
        <taxon>Streptococcus</taxon>
    </lineage>
</organism>
<dbReference type="EMBL" id="CP000262">
    <property type="protein sequence ID" value="ABF38837.1"/>
    <property type="molecule type" value="Genomic_DNA"/>
</dbReference>
<dbReference type="KEGG" id="spi:MGAS10750_Spy1887"/>
<dbReference type="HOGENOM" id="CLU_146610_2_1_9"/>
<dbReference type="Proteomes" id="UP000002434">
    <property type="component" value="Chromosome"/>
</dbReference>
<dbReference type="HAMAP" id="MF_01448">
    <property type="entry name" value="UPF0473"/>
    <property type="match status" value="1"/>
</dbReference>
<dbReference type="InterPro" id="IPR009711">
    <property type="entry name" value="UPF0473"/>
</dbReference>
<dbReference type="NCBIfam" id="NF010215">
    <property type="entry name" value="PRK13678.1-2"/>
    <property type="match status" value="1"/>
</dbReference>
<dbReference type="NCBIfam" id="NF010217">
    <property type="entry name" value="PRK13678.1-4"/>
    <property type="match status" value="1"/>
</dbReference>
<dbReference type="PANTHER" id="PTHR40066">
    <property type="entry name" value="UPF0473 PROTEIN CBO2561/CLC_2432"/>
    <property type="match status" value="1"/>
</dbReference>
<dbReference type="PANTHER" id="PTHR40066:SF1">
    <property type="entry name" value="UPF0473 PROTEIN CBO2561_CLC_2432"/>
    <property type="match status" value="1"/>
</dbReference>
<dbReference type="Pfam" id="PF06949">
    <property type="entry name" value="DUF1292"/>
    <property type="match status" value="1"/>
</dbReference>
<gene>
    <name type="ordered locus">MGAS10750_Spy1887</name>
</gene>
<proteinExistence type="inferred from homology"/>